<feature type="chain" id="PRO_0000146487" description="Small ribosomal subunit protein uS10">
    <location>
        <begin position="1"/>
        <end position="104"/>
    </location>
</feature>
<feature type="strand" evidence="3">
    <location>
        <begin position="6"/>
        <end position="13"/>
    </location>
</feature>
<feature type="helix" evidence="3">
    <location>
        <begin position="15"/>
        <end position="31"/>
    </location>
</feature>
<feature type="strand" evidence="3">
    <location>
        <begin position="35"/>
        <end position="45"/>
    </location>
</feature>
<feature type="strand" evidence="3">
    <location>
        <begin position="69"/>
        <end position="78"/>
    </location>
</feature>
<feature type="helix" evidence="3">
    <location>
        <begin position="81"/>
        <end position="88"/>
    </location>
</feature>
<feature type="strand" evidence="3">
    <location>
        <begin position="97"/>
        <end position="101"/>
    </location>
</feature>
<keyword id="KW-0002">3D-structure</keyword>
<keyword id="KW-1185">Reference proteome</keyword>
<keyword id="KW-0687">Ribonucleoprotein</keyword>
<keyword id="KW-0689">Ribosomal protein</keyword>
<protein>
    <recommendedName>
        <fullName evidence="1">Small ribosomal subunit protein uS10</fullName>
    </recommendedName>
    <alternativeName>
        <fullName evidence="2">30S ribosomal protein S10</fullName>
    </alternativeName>
</protein>
<organism>
    <name type="scientific">Aquifex aeolicus (strain VF5)</name>
    <dbReference type="NCBI Taxonomy" id="224324"/>
    <lineage>
        <taxon>Bacteria</taxon>
        <taxon>Pseudomonadati</taxon>
        <taxon>Aquificota</taxon>
        <taxon>Aquificia</taxon>
        <taxon>Aquificales</taxon>
        <taxon>Aquificaceae</taxon>
        <taxon>Aquifex</taxon>
    </lineage>
</organism>
<comment type="function">
    <text evidence="1">Involved in the binding of tRNA to the ribosomes.</text>
</comment>
<comment type="subunit">
    <text evidence="1">Part of the 30S ribosomal subunit.</text>
</comment>
<comment type="similarity">
    <text evidence="1">Belongs to the universal ribosomal protein uS10 family.</text>
</comment>
<name>RS10_AQUAE</name>
<dbReference type="EMBL" id="AE000657">
    <property type="protein sequence ID" value="AAC06399.1"/>
    <property type="molecule type" value="Genomic_DNA"/>
</dbReference>
<dbReference type="PIR" id="C70300">
    <property type="entry name" value="C70300"/>
</dbReference>
<dbReference type="RefSeq" id="NP_212988.1">
    <property type="nucleotide sequence ID" value="NC_000918.1"/>
</dbReference>
<dbReference type="RefSeq" id="WP_010879926.1">
    <property type="nucleotide sequence ID" value="NC_000918.1"/>
</dbReference>
<dbReference type="PDB" id="3R2C">
    <property type="method" value="X-ray"/>
    <property type="resolution" value="1.90 A"/>
    <property type="chains" value="J/K=1-46, J/K=69-104"/>
</dbReference>
<dbReference type="PDB" id="3R2D">
    <property type="method" value="X-ray"/>
    <property type="resolution" value="2.20 A"/>
    <property type="chains" value="J/K=1-46, J/K=69-104"/>
</dbReference>
<dbReference type="PDBsum" id="3R2C"/>
<dbReference type="PDBsum" id="3R2D"/>
<dbReference type="SMR" id="O66430"/>
<dbReference type="FunCoup" id="O66430">
    <property type="interactions" value="497"/>
</dbReference>
<dbReference type="STRING" id="224324.aq_008"/>
<dbReference type="EnsemblBacteria" id="AAC06399">
    <property type="protein sequence ID" value="AAC06399"/>
    <property type="gene ID" value="aq_008"/>
</dbReference>
<dbReference type="KEGG" id="aae:aq_008"/>
<dbReference type="PATRIC" id="fig|224324.8.peg.3"/>
<dbReference type="eggNOG" id="COG0051">
    <property type="taxonomic scope" value="Bacteria"/>
</dbReference>
<dbReference type="HOGENOM" id="CLU_122625_1_3_0"/>
<dbReference type="InParanoid" id="O66430"/>
<dbReference type="OrthoDB" id="9804464at2"/>
<dbReference type="EvolutionaryTrace" id="O66430"/>
<dbReference type="Proteomes" id="UP000000798">
    <property type="component" value="Chromosome"/>
</dbReference>
<dbReference type="GO" id="GO:0015935">
    <property type="term" value="C:small ribosomal subunit"/>
    <property type="evidence" value="ECO:0000318"/>
    <property type="project" value="GO_Central"/>
</dbReference>
<dbReference type="GO" id="GO:0003735">
    <property type="term" value="F:structural constituent of ribosome"/>
    <property type="evidence" value="ECO:0000318"/>
    <property type="project" value="GO_Central"/>
</dbReference>
<dbReference type="GO" id="GO:0000049">
    <property type="term" value="F:tRNA binding"/>
    <property type="evidence" value="ECO:0007669"/>
    <property type="project" value="UniProtKB-UniRule"/>
</dbReference>
<dbReference type="GO" id="GO:0006412">
    <property type="term" value="P:translation"/>
    <property type="evidence" value="ECO:0007669"/>
    <property type="project" value="UniProtKB-UniRule"/>
</dbReference>
<dbReference type="FunFam" id="3.30.70.600:FF:000020">
    <property type="entry name" value="30S ribosomal protein S10"/>
    <property type="match status" value="1"/>
</dbReference>
<dbReference type="Gene3D" id="3.30.70.600">
    <property type="entry name" value="Ribosomal protein S10 domain"/>
    <property type="match status" value="1"/>
</dbReference>
<dbReference type="HAMAP" id="MF_00508">
    <property type="entry name" value="Ribosomal_uS10"/>
    <property type="match status" value="1"/>
</dbReference>
<dbReference type="InterPro" id="IPR001848">
    <property type="entry name" value="Ribosomal_uS10"/>
</dbReference>
<dbReference type="InterPro" id="IPR018268">
    <property type="entry name" value="Ribosomal_uS10_CS"/>
</dbReference>
<dbReference type="InterPro" id="IPR027486">
    <property type="entry name" value="Ribosomal_uS10_dom"/>
</dbReference>
<dbReference type="InterPro" id="IPR036838">
    <property type="entry name" value="Ribosomal_uS10_dom_sf"/>
</dbReference>
<dbReference type="NCBIfam" id="NF001861">
    <property type="entry name" value="PRK00596.1"/>
    <property type="match status" value="1"/>
</dbReference>
<dbReference type="NCBIfam" id="TIGR01049">
    <property type="entry name" value="rpsJ_bact"/>
    <property type="match status" value="1"/>
</dbReference>
<dbReference type="PANTHER" id="PTHR11700">
    <property type="entry name" value="30S RIBOSOMAL PROTEIN S10 FAMILY MEMBER"/>
    <property type="match status" value="1"/>
</dbReference>
<dbReference type="Pfam" id="PF00338">
    <property type="entry name" value="Ribosomal_S10"/>
    <property type="match status" value="1"/>
</dbReference>
<dbReference type="PRINTS" id="PR00971">
    <property type="entry name" value="RIBOSOMALS10"/>
</dbReference>
<dbReference type="SMART" id="SM01403">
    <property type="entry name" value="Ribosomal_S10"/>
    <property type="match status" value="1"/>
</dbReference>
<dbReference type="SUPFAM" id="SSF54999">
    <property type="entry name" value="Ribosomal protein S10"/>
    <property type="match status" value="1"/>
</dbReference>
<dbReference type="PROSITE" id="PS00361">
    <property type="entry name" value="RIBOSOMAL_S10"/>
    <property type="match status" value="1"/>
</dbReference>
<sequence>MEQEKIRIKLRAYDHRLLDQSVKQIIETVKRTGGVVKGPIPLPTRKRKWCVLRSPHKFDQSREHFEIREFSRILDIIRFTPQTIEALMEISLPAGVDVEVKMRG</sequence>
<accession>O66430</accession>
<reference key="1">
    <citation type="journal article" date="1998" name="Nature">
        <title>The complete genome of the hyperthermophilic bacterium Aquifex aeolicus.</title>
        <authorList>
            <person name="Deckert G."/>
            <person name="Warren P.V."/>
            <person name="Gaasterland T."/>
            <person name="Young W.G."/>
            <person name="Lenox A.L."/>
            <person name="Graham D.E."/>
            <person name="Overbeek R."/>
            <person name="Snead M.A."/>
            <person name="Keller M."/>
            <person name="Aujay M."/>
            <person name="Huber R."/>
            <person name="Feldman R.A."/>
            <person name="Short J.M."/>
            <person name="Olsen G.J."/>
            <person name="Swanson R.V."/>
        </authorList>
    </citation>
    <scope>NUCLEOTIDE SEQUENCE [LARGE SCALE GENOMIC DNA]</scope>
    <source>
        <strain>VF5</strain>
    </source>
</reference>
<proteinExistence type="evidence at protein level"/>
<gene>
    <name evidence="1" type="primary">rpsJ</name>
    <name type="ordered locus">aq_008</name>
</gene>
<evidence type="ECO:0000255" key="1">
    <source>
        <dbReference type="HAMAP-Rule" id="MF_00508"/>
    </source>
</evidence>
<evidence type="ECO:0000305" key="2"/>
<evidence type="ECO:0007829" key="3">
    <source>
        <dbReference type="PDB" id="3R2C"/>
    </source>
</evidence>